<proteinExistence type="inferred from homology"/>
<sequence>MAKNLKKGKKVFNKSTRKINRLKEEEELAKLQERINNYDPKTDEASVSQFSDLPITENTLKGLKEATFVSLTDIQKKTIPIALKGEDLMGTARTGSGKTLAFLIPVIESLIRNKITEYDGLAALIVSPTRELAVQIFEVLTKIGKYNTFSAGLVTGGKDVQFEKERVSRMNILVGTPGRISQHLNEAVGMETSNLQVLVLDEADRCLDMGFKKQIDNILGHLPTTRQTLLFSATQSESVNDLARLSLTNPNKIGVSSDQEVSATPESLEQYYVKVPLDEKLDVLWSFIKSHLKSKILVFFSSSKQVQYTYETFRTLQPGISLMKLYGRHKQTSRLETTMKFSQAQHACLFATDIVARGLDFPAIDWVVQVDCPEDAATYVHRVGRSARFGRKGKSLLMLLPSEEEGMLKRLKIHKIEPKLMNIKQKSKKSIRPQLQSLCFKDPVMKNLGQRAFIAYFKSVHIQKDKDVFKVEELPAESYAASLGLPGAPKIKIKGGESNKEKKNASRKLIALAKTDADGEVQTGNEKVRTKYDRMFERKNQTILSDHYLNMTGNKVNSDGESEDEDFMTVKRKDHELKEEELPDLTIPVSKRQAKKALSRKATLASKGNPTKLKFDDDGVAHAIYELEDEDDFIKAGDAKKQKEEFVNKERETMKISDITDKEVERQKRQEKKRKRKEIERRMREEEEEDFDNEQTVVTLGAPDLDRDLQYDNGSDVEEPVSKKPKWFEGGDDDKSKNTNDGFVEYDEPETLEDLESLTARLIGN</sequence>
<protein>
    <recommendedName>
        <fullName>ATP-dependent RNA helicase DBP4</fullName>
        <ecNumber>3.6.4.13</ecNumber>
    </recommendedName>
</protein>
<keyword id="KW-0067">ATP-binding</keyword>
<keyword id="KW-0347">Helicase</keyword>
<keyword id="KW-0378">Hydrolase</keyword>
<keyword id="KW-0547">Nucleotide-binding</keyword>
<keyword id="KW-0539">Nucleus</keyword>
<keyword id="KW-1185">Reference proteome</keyword>
<keyword id="KW-0690">Ribosome biogenesis</keyword>
<keyword id="KW-0694">RNA-binding</keyword>
<keyword id="KW-0698">rRNA processing</keyword>
<dbReference type="EC" id="3.6.4.13"/>
<dbReference type="EMBL" id="CP017626">
    <property type="protein sequence ID" value="AOW29049.1"/>
    <property type="molecule type" value="Genomic_DNA"/>
</dbReference>
<dbReference type="RefSeq" id="XP_720463.1">
    <property type="nucleotide sequence ID" value="XM_715370.1"/>
</dbReference>
<dbReference type="SMR" id="Q5AF95"/>
<dbReference type="FunCoup" id="Q5AF95">
    <property type="interactions" value="1116"/>
</dbReference>
<dbReference type="STRING" id="237561.Q5AF95"/>
<dbReference type="EnsemblFungi" id="C4_02830C_A-T">
    <property type="protein sequence ID" value="C4_02830C_A-T-p1"/>
    <property type="gene ID" value="C4_02830C_A"/>
</dbReference>
<dbReference type="GeneID" id="3637911"/>
<dbReference type="KEGG" id="cal:CAALFM_C402830CA"/>
<dbReference type="CGD" id="CAL0000199884">
    <property type="gene designation" value="HCA4"/>
</dbReference>
<dbReference type="VEuPathDB" id="FungiDB:C4_02830C_A"/>
<dbReference type="eggNOG" id="KOG0343">
    <property type="taxonomic scope" value="Eukaryota"/>
</dbReference>
<dbReference type="HOGENOM" id="CLU_003041_26_1_1"/>
<dbReference type="InParanoid" id="Q5AF95"/>
<dbReference type="OMA" id="YDKMFER"/>
<dbReference type="OrthoDB" id="10259640at2759"/>
<dbReference type="PRO" id="PR:Q5AF95"/>
<dbReference type="Proteomes" id="UP000000559">
    <property type="component" value="Chromosome 4"/>
</dbReference>
<dbReference type="GO" id="GO:0005730">
    <property type="term" value="C:nucleolus"/>
    <property type="evidence" value="ECO:0007669"/>
    <property type="project" value="UniProtKB-SubCell"/>
</dbReference>
<dbReference type="GO" id="GO:0005634">
    <property type="term" value="C:nucleus"/>
    <property type="evidence" value="ECO:0000318"/>
    <property type="project" value="GO_Central"/>
</dbReference>
<dbReference type="GO" id="GO:0032040">
    <property type="term" value="C:small-subunit processome"/>
    <property type="evidence" value="ECO:0007669"/>
    <property type="project" value="EnsemblFungi"/>
</dbReference>
<dbReference type="GO" id="GO:0005524">
    <property type="term" value="F:ATP binding"/>
    <property type="evidence" value="ECO:0007669"/>
    <property type="project" value="UniProtKB-KW"/>
</dbReference>
<dbReference type="GO" id="GO:0016887">
    <property type="term" value="F:ATP hydrolysis activity"/>
    <property type="evidence" value="ECO:0007669"/>
    <property type="project" value="RHEA"/>
</dbReference>
<dbReference type="GO" id="GO:0042802">
    <property type="term" value="F:identical protein binding"/>
    <property type="evidence" value="ECO:0007669"/>
    <property type="project" value="EnsemblFungi"/>
</dbReference>
<dbReference type="GO" id="GO:0003723">
    <property type="term" value="F:RNA binding"/>
    <property type="evidence" value="ECO:0007669"/>
    <property type="project" value="UniProtKB-KW"/>
</dbReference>
<dbReference type="GO" id="GO:0003724">
    <property type="term" value="F:RNA helicase activity"/>
    <property type="evidence" value="ECO:0007669"/>
    <property type="project" value="UniProtKB-EC"/>
</dbReference>
<dbReference type="GO" id="GO:0006364">
    <property type="term" value="P:rRNA processing"/>
    <property type="evidence" value="ECO:0000318"/>
    <property type="project" value="GO_Central"/>
</dbReference>
<dbReference type="CDD" id="cd17941">
    <property type="entry name" value="DEADc_DDX10"/>
    <property type="match status" value="1"/>
</dbReference>
<dbReference type="CDD" id="cd18787">
    <property type="entry name" value="SF2_C_DEAD"/>
    <property type="match status" value="1"/>
</dbReference>
<dbReference type="Gene3D" id="3.40.50.300">
    <property type="entry name" value="P-loop containing nucleotide triphosphate hydrolases"/>
    <property type="match status" value="2"/>
</dbReference>
<dbReference type="InterPro" id="IPR011545">
    <property type="entry name" value="DEAD/DEAH_box_helicase_dom"/>
</dbReference>
<dbReference type="InterPro" id="IPR014001">
    <property type="entry name" value="Helicase_ATP-bd"/>
</dbReference>
<dbReference type="InterPro" id="IPR001650">
    <property type="entry name" value="Helicase_C-like"/>
</dbReference>
<dbReference type="InterPro" id="IPR027417">
    <property type="entry name" value="P-loop_NTPase"/>
</dbReference>
<dbReference type="InterPro" id="IPR000629">
    <property type="entry name" value="RNA-helicase_DEAD-box_CS"/>
</dbReference>
<dbReference type="InterPro" id="IPR014014">
    <property type="entry name" value="RNA_helicase_DEAD_Q_motif"/>
</dbReference>
<dbReference type="InterPro" id="IPR025313">
    <property type="entry name" value="SPB4-like_CTE"/>
</dbReference>
<dbReference type="PANTHER" id="PTHR24031">
    <property type="entry name" value="RNA HELICASE"/>
    <property type="match status" value="1"/>
</dbReference>
<dbReference type="Pfam" id="PF13959">
    <property type="entry name" value="CTE_SPB4"/>
    <property type="match status" value="1"/>
</dbReference>
<dbReference type="Pfam" id="PF00270">
    <property type="entry name" value="DEAD"/>
    <property type="match status" value="1"/>
</dbReference>
<dbReference type="Pfam" id="PF00271">
    <property type="entry name" value="Helicase_C"/>
    <property type="match status" value="1"/>
</dbReference>
<dbReference type="SMART" id="SM00487">
    <property type="entry name" value="DEXDc"/>
    <property type="match status" value="1"/>
</dbReference>
<dbReference type="SMART" id="SM01178">
    <property type="entry name" value="DUF4217"/>
    <property type="match status" value="1"/>
</dbReference>
<dbReference type="SMART" id="SM00490">
    <property type="entry name" value="HELICc"/>
    <property type="match status" value="1"/>
</dbReference>
<dbReference type="SUPFAM" id="SSF52540">
    <property type="entry name" value="P-loop containing nucleoside triphosphate hydrolases"/>
    <property type="match status" value="1"/>
</dbReference>
<dbReference type="PROSITE" id="PS00039">
    <property type="entry name" value="DEAD_ATP_HELICASE"/>
    <property type="match status" value="1"/>
</dbReference>
<dbReference type="PROSITE" id="PS51192">
    <property type="entry name" value="HELICASE_ATP_BIND_1"/>
    <property type="match status" value="1"/>
</dbReference>
<dbReference type="PROSITE" id="PS51194">
    <property type="entry name" value="HELICASE_CTER"/>
    <property type="match status" value="1"/>
</dbReference>
<dbReference type="PROSITE" id="PS51195">
    <property type="entry name" value="Q_MOTIF"/>
    <property type="match status" value="1"/>
</dbReference>
<organism>
    <name type="scientific">Candida albicans (strain SC5314 / ATCC MYA-2876)</name>
    <name type="common">Yeast</name>
    <dbReference type="NCBI Taxonomy" id="237561"/>
    <lineage>
        <taxon>Eukaryota</taxon>
        <taxon>Fungi</taxon>
        <taxon>Dikarya</taxon>
        <taxon>Ascomycota</taxon>
        <taxon>Saccharomycotina</taxon>
        <taxon>Pichiomycetes</taxon>
        <taxon>Debaryomycetaceae</taxon>
        <taxon>Candida/Lodderomyces clade</taxon>
        <taxon>Candida</taxon>
    </lineage>
</organism>
<gene>
    <name type="primary">DBP4</name>
    <name type="synonym">HCA4</name>
    <name type="ordered locus">CAALFM_C402830CA</name>
    <name type="ORF">CaO19.10227</name>
    <name type="ORF">CaO19.2712</name>
</gene>
<feature type="chain" id="PRO_0000232196" description="ATP-dependent RNA helicase DBP4">
    <location>
        <begin position="1"/>
        <end position="765"/>
    </location>
</feature>
<feature type="domain" description="Helicase ATP-binding" evidence="2">
    <location>
        <begin position="79"/>
        <end position="253"/>
    </location>
</feature>
<feature type="domain" description="Helicase C-terminal" evidence="3">
    <location>
        <begin position="267"/>
        <end position="439"/>
    </location>
</feature>
<feature type="region of interest" description="Disordered" evidence="4">
    <location>
        <begin position="655"/>
        <end position="765"/>
    </location>
</feature>
<feature type="short sequence motif" description="Q motif">
    <location>
        <begin position="48"/>
        <end position="76"/>
    </location>
</feature>
<feature type="short sequence motif" description="DEAD box">
    <location>
        <begin position="201"/>
        <end position="204"/>
    </location>
</feature>
<feature type="compositionally biased region" description="Basic and acidic residues" evidence="4">
    <location>
        <begin position="655"/>
        <end position="668"/>
    </location>
</feature>
<feature type="compositionally biased region" description="Basic and acidic residues" evidence="4">
    <location>
        <begin position="720"/>
        <end position="738"/>
    </location>
</feature>
<feature type="compositionally biased region" description="Acidic residues" evidence="4">
    <location>
        <begin position="744"/>
        <end position="756"/>
    </location>
</feature>
<feature type="binding site" evidence="2">
    <location>
        <begin position="92"/>
        <end position="99"/>
    </location>
    <ligand>
        <name>ATP</name>
        <dbReference type="ChEBI" id="CHEBI:30616"/>
    </ligand>
</feature>
<name>DBP4_CANAL</name>
<evidence type="ECO:0000250" key="1"/>
<evidence type="ECO:0000255" key="2">
    <source>
        <dbReference type="PROSITE-ProRule" id="PRU00541"/>
    </source>
</evidence>
<evidence type="ECO:0000255" key="3">
    <source>
        <dbReference type="PROSITE-ProRule" id="PRU00542"/>
    </source>
</evidence>
<evidence type="ECO:0000256" key="4">
    <source>
        <dbReference type="SAM" id="MobiDB-lite"/>
    </source>
</evidence>
<evidence type="ECO:0000305" key="5"/>
<reference key="1">
    <citation type="journal article" date="2004" name="Proc. Natl. Acad. Sci. U.S.A.">
        <title>The diploid genome sequence of Candida albicans.</title>
        <authorList>
            <person name="Jones T."/>
            <person name="Federspiel N.A."/>
            <person name="Chibana H."/>
            <person name="Dungan J."/>
            <person name="Kalman S."/>
            <person name="Magee B.B."/>
            <person name="Newport G."/>
            <person name="Thorstenson Y.R."/>
            <person name="Agabian N."/>
            <person name="Magee P.T."/>
            <person name="Davis R.W."/>
            <person name="Scherer S."/>
        </authorList>
    </citation>
    <scope>NUCLEOTIDE SEQUENCE [LARGE SCALE GENOMIC DNA]</scope>
    <source>
        <strain>SC5314 / ATCC MYA-2876</strain>
    </source>
</reference>
<reference key="2">
    <citation type="journal article" date="2007" name="Genome Biol.">
        <title>Assembly of the Candida albicans genome into sixteen supercontigs aligned on the eight chromosomes.</title>
        <authorList>
            <person name="van het Hoog M."/>
            <person name="Rast T.J."/>
            <person name="Martchenko M."/>
            <person name="Grindle S."/>
            <person name="Dignard D."/>
            <person name="Hogues H."/>
            <person name="Cuomo C."/>
            <person name="Berriman M."/>
            <person name="Scherer S."/>
            <person name="Magee B.B."/>
            <person name="Whiteway M."/>
            <person name="Chibana H."/>
            <person name="Nantel A."/>
            <person name="Magee P.T."/>
        </authorList>
    </citation>
    <scope>GENOME REANNOTATION</scope>
    <source>
        <strain>SC5314 / ATCC MYA-2876</strain>
    </source>
</reference>
<reference key="3">
    <citation type="journal article" date="2013" name="Genome Biol.">
        <title>Assembly of a phased diploid Candida albicans genome facilitates allele-specific measurements and provides a simple model for repeat and indel structure.</title>
        <authorList>
            <person name="Muzzey D."/>
            <person name="Schwartz K."/>
            <person name="Weissman J.S."/>
            <person name="Sherlock G."/>
        </authorList>
    </citation>
    <scope>NUCLEOTIDE SEQUENCE [LARGE SCALE GENOMIC DNA]</scope>
    <scope>GENOME REANNOTATION</scope>
    <source>
        <strain>SC5314 / ATCC MYA-2876</strain>
    </source>
</reference>
<accession>Q5AF95</accession>
<accession>A0A1D8PLM9</accession>
<comment type="function">
    <text evidence="1">ATP-dependent RNA helicase required for ribosome biogenesis. Involved in the release of U14 snoRNA in pre-ribosomal complexes. Required for pre-rRNA cleavage at site A2 (By similarity).</text>
</comment>
<comment type="catalytic activity">
    <reaction>
        <text>ATP + H2O = ADP + phosphate + H(+)</text>
        <dbReference type="Rhea" id="RHEA:13065"/>
        <dbReference type="ChEBI" id="CHEBI:15377"/>
        <dbReference type="ChEBI" id="CHEBI:15378"/>
        <dbReference type="ChEBI" id="CHEBI:30616"/>
        <dbReference type="ChEBI" id="CHEBI:43474"/>
        <dbReference type="ChEBI" id="CHEBI:456216"/>
        <dbReference type="EC" id="3.6.4.13"/>
    </reaction>
</comment>
<comment type="subunit">
    <text evidence="1">Interacts with the U3 and U14 snoRNAs. Associates with pre-ribosomal complexes (By similarity).</text>
</comment>
<comment type="subcellular location">
    <subcellularLocation>
        <location evidence="1">Nucleus</location>
        <location evidence="1">Nucleolus</location>
    </subcellularLocation>
</comment>
<comment type="domain">
    <text>The Q motif is unique to and characteristic of the DEAD box family of RNA helicases and controls ATP binding and hydrolysis.</text>
</comment>
<comment type="similarity">
    <text evidence="5">Belongs to the DEAD box helicase family. DDX10/DBP4 subfamily.</text>
</comment>